<dbReference type="EC" id="3.1.11.6" evidence="1"/>
<dbReference type="EMBL" id="CR628336">
    <property type="protein sequence ID" value="CAH13430.1"/>
    <property type="molecule type" value="Genomic_DNA"/>
</dbReference>
<dbReference type="RefSeq" id="WP_011947173.1">
    <property type="nucleotide sequence ID" value="NC_006368.1"/>
</dbReference>
<dbReference type="SMR" id="Q5X2W0"/>
<dbReference type="KEGG" id="lpp:lpp2277"/>
<dbReference type="LegioList" id="lpp2277"/>
<dbReference type="HOGENOM" id="CLU_145918_3_2_6"/>
<dbReference type="GO" id="GO:0005829">
    <property type="term" value="C:cytosol"/>
    <property type="evidence" value="ECO:0007669"/>
    <property type="project" value="TreeGrafter"/>
</dbReference>
<dbReference type="GO" id="GO:0009318">
    <property type="term" value="C:exodeoxyribonuclease VII complex"/>
    <property type="evidence" value="ECO:0007669"/>
    <property type="project" value="InterPro"/>
</dbReference>
<dbReference type="GO" id="GO:0008855">
    <property type="term" value="F:exodeoxyribonuclease VII activity"/>
    <property type="evidence" value="ECO:0007669"/>
    <property type="project" value="UniProtKB-UniRule"/>
</dbReference>
<dbReference type="GO" id="GO:0006308">
    <property type="term" value="P:DNA catabolic process"/>
    <property type="evidence" value="ECO:0007669"/>
    <property type="project" value="UniProtKB-UniRule"/>
</dbReference>
<dbReference type="Gene3D" id="1.10.287.1040">
    <property type="entry name" value="Exonuclease VII, small subunit"/>
    <property type="match status" value="1"/>
</dbReference>
<dbReference type="HAMAP" id="MF_00337">
    <property type="entry name" value="Exonuc_7_S"/>
    <property type="match status" value="1"/>
</dbReference>
<dbReference type="InterPro" id="IPR003761">
    <property type="entry name" value="Exonuc_VII_S"/>
</dbReference>
<dbReference type="InterPro" id="IPR037004">
    <property type="entry name" value="Exonuc_VII_ssu_sf"/>
</dbReference>
<dbReference type="NCBIfam" id="NF002139">
    <property type="entry name" value="PRK00977.1-3"/>
    <property type="match status" value="1"/>
</dbReference>
<dbReference type="NCBIfam" id="NF002140">
    <property type="entry name" value="PRK00977.1-4"/>
    <property type="match status" value="1"/>
</dbReference>
<dbReference type="NCBIfam" id="TIGR01280">
    <property type="entry name" value="xseB"/>
    <property type="match status" value="1"/>
</dbReference>
<dbReference type="PANTHER" id="PTHR34137">
    <property type="entry name" value="EXODEOXYRIBONUCLEASE 7 SMALL SUBUNIT"/>
    <property type="match status" value="1"/>
</dbReference>
<dbReference type="PANTHER" id="PTHR34137:SF1">
    <property type="entry name" value="EXODEOXYRIBONUCLEASE 7 SMALL SUBUNIT"/>
    <property type="match status" value="1"/>
</dbReference>
<dbReference type="Pfam" id="PF02609">
    <property type="entry name" value="Exonuc_VII_S"/>
    <property type="match status" value="1"/>
</dbReference>
<dbReference type="PIRSF" id="PIRSF006488">
    <property type="entry name" value="Exonuc_VII_S"/>
    <property type="match status" value="1"/>
</dbReference>
<dbReference type="SUPFAM" id="SSF116842">
    <property type="entry name" value="XseB-like"/>
    <property type="match status" value="1"/>
</dbReference>
<proteinExistence type="inferred from homology"/>
<gene>
    <name evidence="1" type="primary">xseB</name>
    <name type="ordered locus">lpp2277</name>
</gene>
<reference key="1">
    <citation type="journal article" date="2004" name="Nat. Genet.">
        <title>Evidence in the Legionella pneumophila genome for exploitation of host cell functions and high genome plasticity.</title>
        <authorList>
            <person name="Cazalet C."/>
            <person name="Rusniok C."/>
            <person name="Brueggemann H."/>
            <person name="Zidane N."/>
            <person name="Magnier A."/>
            <person name="Ma L."/>
            <person name="Tichit M."/>
            <person name="Jarraud S."/>
            <person name="Bouchier C."/>
            <person name="Vandenesch F."/>
            <person name="Kunst F."/>
            <person name="Etienne J."/>
            <person name="Glaser P."/>
            <person name="Buchrieser C."/>
        </authorList>
    </citation>
    <scope>NUCLEOTIDE SEQUENCE [LARGE SCALE GENOMIC DNA]</scope>
    <source>
        <strain>Paris</strain>
    </source>
</reference>
<name>EX7S_LEGPA</name>
<sequence length="76" mass="8626">MSKGIHFEQSITELEEIVRQLEKGELTLEESLKQFEKGISLARRCQNALNQAEQKIETLTGTDSNIELDSDEQTSD</sequence>
<feature type="chain" id="PRO_0000206961" description="Exodeoxyribonuclease 7 small subunit">
    <location>
        <begin position="1"/>
        <end position="76"/>
    </location>
</feature>
<keyword id="KW-0963">Cytoplasm</keyword>
<keyword id="KW-0269">Exonuclease</keyword>
<keyword id="KW-0378">Hydrolase</keyword>
<keyword id="KW-0540">Nuclease</keyword>
<comment type="function">
    <text evidence="1">Bidirectionally degrades single-stranded DNA into large acid-insoluble oligonucleotides, which are then degraded further into small acid-soluble oligonucleotides.</text>
</comment>
<comment type="catalytic activity">
    <reaction evidence="1">
        <text>Exonucleolytic cleavage in either 5'- to 3'- or 3'- to 5'-direction to yield nucleoside 5'-phosphates.</text>
        <dbReference type="EC" id="3.1.11.6"/>
    </reaction>
</comment>
<comment type="subunit">
    <text evidence="1">Heterooligomer composed of large and small subunits.</text>
</comment>
<comment type="subcellular location">
    <subcellularLocation>
        <location evidence="1">Cytoplasm</location>
    </subcellularLocation>
</comment>
<comment type="similarity">
    <text evidence="1">Belongs to the XseB family.</text>
</comment>
<accession>Q5X2W0</accession>
<evidence type="ECO:0000255" key="1">
    <source>
        <dbReference type="HAMAP-Rule" id="MF_00337"/>
    </source>
</evidence>
<protein>
    <recommendedName>
        <fullName evidence="1">Exodeoxyribonuclease 7 small subunit</fullName>
        <ecNumber evidence="1">3.1.11.6</ecNumber>
    </recommendedName>
    <alternativeName>
        <fullName evidence="1">Exodeoxyribonuclease VII small subunit</fullName>
        <shortName evidence="1">Exonuclease VII small subunit</shortName>
    </alternativeName>
</protein>
<organism>
    <name type="scientific">Legionella pneumophila (strain Paris)</name>
    <dbReference type="NCBI Taxonomy" id="297246"/>
    <lineage>
        <taxon>Bacteria</taxon>
        <taxon>Pseudomonadati</taxon>
        <taxon>Pseudomonadota</taxon>
        <taxon>Gammaproteobacteria</taxon>
        <taxon>Legionellales</taxon>
        <taxon>Legionellaceae</taxon>
        <taxon>Legionella</taxon>
    </lineage>
</organism>